<comment type="subcellular location">
    <subcellularLocation>
        <location evidence="2">Membrane</location>
        <topology evidence="2">Single-pass membrane protein</topology>
    </subcellularLocation>
</comment>
<comment type="caution">
    <text evidence="2">Could be the product of a pseudogene.</text>
</comment>
<proteinExistence type="uncertain"/>
<accession>P33669</accession>
<accession>P77722</accession>
<accession>Q2MBS7</accession>
<gene>
    <name type="primary">ybbD</name>
    <name type="ordered locus">b0501</name>
    <name type="ordered locus">JW0489</name>
</gene>
<evidence type="ECO:0000255" key="1"/>
<evidence type="ECO:0000305" key="2"/>
<name>YBBD_ECOLI</name>
<dbReference type="EMBL" id="X60999">
    <property type="protein sequence ID" value="CAA43316.1"/>
    <property type="molecule type" value="Genomic_DNA"/>
</dbReference>
<dbReference type="EMBL" id="U82664">
    <property type="protein sequence ID" value="AAB40254.1"/>
    <property type="molecule type" value="Genomic_DNA"/>
</dbReference>
<dbReference type="EMBL" id="U00096">
    <property type="status" value="NOT_ANNOTATED_CDS"/>
    <property type="molecule type" value="Genomic_DNA"/>
</dbReference>
<dbReference type="EMBL" id="AP009048">
    <property type="protein sequence ID" value="BAE76279.1"/>
    <property type="molecule type" value="Genomic_DNA"/>
</dbReference>
<dbReference type="PIR" id="C64781">
    <property type="entry name" value="C64781"/>
</dbReference>
<dbReference type="RefSeq" id="WP_001320180.1">
    <property type="nucleotide sequence ID" value="NZ_SSZK01000024.1"/>
</dbReference>
<dbReference type="SMR" id="P33669"/>
<dbReference type="BioGRID" id="4259868">
    <property type="interactions" value="17"/>
</dbReference>
<dbReference type="FunCoup" id="P33669">
    <property type="interactions" value="18"/>
</dbReference>
<dbReference type="KEGG" id="ecj:JW0489"/>
<dbReference type="KEGG" id="ecoc:C3026_02460"/>
<dbReference type="PATRIC" id="fig|83333.103.peg.1267"/>
<dbReference type="EchoBASE" id="EB1720"/>
<dbReference type="HOGENOM" id="CLU_2492898_0_0_6"/>
<dbReference type="InParanoid" id="P33669"/>
<dbReference type="OrthoDB" id="6637339at2"/>
<dbReference type="PhylomeDB" id="P33669"/>
<dbReference type="Proteomes" id="UP000000625">
    <property type="component" value="Chromosome"/>
</dbReference>
<dbReference type="GO" id="GO:0016020">
    <property type="term" value="C:membrane"/>
    <property type="evidence" value="ECO:0007669"/>
    <property type="project" value="UniProtKB-SubCell"/>
</dbReference>
<dbReference type="NCBIfam" id="NF011297">
    <property type="entry name" value="PRK14710.1-1"/>
    <property type="match status" value="1"/>
</dbReference>
<organism>
    <name type="scientific">Escherichia coli (strain K12)</name>
    <dbReference type="NCBI Taxonomy" id="83333"/>
    <lineage>
        <taxon>Bacteria</taxon>
        <taxon>Pseudomonadati</taxon>
        <taxon>Pseudomonadota</taxon>
        <taxon>Gammaproteobacteria</taxon>
        <taxon>Enterobacterales</taxon>
        <taxon>Enterobacteriaceae</taxon>
        <taxon>Escherichia</taxon>
    </lineage>
</organism>
<sequence>MLAISSNLSKMIIFIFAIIIIVVLCVITYLYLYKDESLVSKHYINYMAIPENDGVFTWLPDFFPHVAVDISIYTNVEDDYFFLIFP</sequence>
<feature type="chain" id="PRO_0000168637" description="Putative uncharacterized protein YbbD">
    <location>
        <begin position="1"/>
        <end position="86"/>
    </location>
</feature>
<feature type="transmembrane region" description="Helical" evidence="1">
    <location>
        <begin position="12"/>
        <end position="32"/>
    </location>
</feature>
<feature type="sequence conflict" description="In Ref. 1." evidence="2" ref="1">
    <original>VDISIYTNVEDDYFFLIFP</original>
    <variation>RGYINIHKCRR</variation>
    <location>
        <begin position="68"/>
        <end position="86"/>
    </location>
</feature>
<reference key="1">
    <citation type="journal article" date="1991" name="Nucleic Acids Res.">
        <title>The RhsD-E subfamily of Escherichia coli K-12.</title>
        <authorList>
            <person name="Sadosky A.B."/>
            <person name="Gray J.A."/>
            <person name="Hill C.W."/>
        </authorList>
    </citation>
    <scope>NUCLEOTIDE SEQUENCE [GENOMIC DNA]</scope>
    <source>
        <strain>K12</strain>
    </source>
</reference>
<reference key="2">
    <citation type="submission" date="1997-01" db="EMBL/GenBank/DDBJ databases">
        <title>Sequence of minutes 4-25 of Escherichia coli.</title>
        <authorList>
            <person name="Chung E."/>
            <person name="Allen E."/>
            <person name="Araujo R."/>
            <person name="Aparicio A.M."/>
            <person name="Davis K."/>
            <person name="Duncan M."/>
            <person name="Federspiel N."/>
            <person name="Hyman R."/>
            <person name="Kalman S."/>
            <person name="Komp C."/>
            <person name="Kurdi O."/>
            <person name="Lew H."/>
            <person name="Lin D."/>
            <person name="Namath A."/>
            <person name="Oefner P."/>
            <person name="Roberts D."/>
            <person name="Schramm S."/>
            <person name="Davis R.W."/>
        </authorList>
    </citation>
    <scope>NUCLEOTIDE SEQUENCE [LARGE SCALE GENOMIC DNA]</scope>
    <source>
        <strain>K12 / MG1655 / ATCC 47076</strain>
    </source>
</reference>
<reference key="3">
    <citation type="journal article" date="1997" name="Science">
        <title>The complete genome sequence of Escherichia coli K-12.</title>
        <authorList>
            <person name="Blattner F.R."/>
            <person name="Plunkett G. III"/>
            <person name="Bloch C.A."/>
            <person name="Perna N.T."/>
            <person name="Burland V."/>
            <person name="Riley M."/>
            <person name="Collado-Vides J."/>
            <person name="Glasner J.D."/>
            <person name="Rode C.K."/>
            <person name="Mayhew G.F."/>
            <person name="Gregor J."/>
            <person name="Davis N.W."/>
            <person name="Kirkpatrick H.A."/>
            <person name="Goeden M.A."/>
            <person name="Rose D.J."/>
            <person name="Mau B."/>
            <person name="Shao Y."/>
        </authorList>
    </citation>
    <scope>NUCLEOTIDE SEQUENCE [LARGE SCALE GENOMIC DNA]</scope>
    <source>
        <strain>K12 / MG1655 / ATCC 47076</strain>
    </source>
</reference>
<reference key="4">
    <citation type="journal article" date="2006" name="Mol. Syst. Biol.">
        <title>Highly accurate genome sequences of Escherichia coli K-12 strains MG1655 and W3110.</title>
        <authorList>
            <person name="Hayashi K."/>
            <person name="Morooka N."/>
            <person name="Yamamoto Y."/>
            <person name="Fujita K."/>
            <person name="Isono K."/>
            <person name="Choi S."/>
            <person name="Ohtsubo E."/>
            <person name="Baba T."/>
            <person name="Wanner B.L."/>
            <person name="Mori H."/>
            <person name="Horiuchi T."/>
        </authorList>
    </citation>
    <scope>NUCLEOTIDE SEQUENCE [LARGE SCALE GENOMIC DNA]</scope>
    <source>
        <strain>K12 / W3110 / ATCC 27325 / DSM 5911</strain>
    </source>
</reference>
<keyword id="KW-0472">Membrane</keyword>
<keyword id="KW-1185">Reference proteome</keyword>
<keyword id="KW-0812">Transmembrane</keyword>
<keyword id="KW-1133">Transmembrane helix</keyword>
<protein>
    <recommendedName>
        <fullName>Putative uncharacterized protein YbbD</fullName>
    </recommendedName>
</protein>